<comment type="function">
    <text evidence="1">Digests double-stranded RNA. Involved in the processing of primary rRNA transcript to yield the immediate precursors to the large and small rRNAs (23S and 16S). Processes some mRNAs, and tRNAs when they are encoded in the rRNA operon. Processes pre-crRNA and tracrRNA of type II CRISPR loci if present in the organism.</text>
</comment>
<comment type="catalytic activity">
    <reaction evidence="1">
        <text>Endonucleolytic cleavage to 5'-phosphomonoester.</text>
        <dbReference type="EC" id="3.1.26.3"/>
    </reaction>
</comment>
<comment type="cofactor">
    <cofactor evidence="1">
        <name>Mg(2+)</name>
        <dbReference type="ChEBI" id="CHEBI:18420"/>
    </cofactor>
</comment>
<comment type="subunit">
    <text evidence="1">Homodimer.</text>
</comment>
<comment type="subcellular location">
    <subcellularLocation>
        <location evidence="1">Cytoplasm</location>
    </subcellularLocation>
</comment>
<comment type="similarity">
    <text evidence="1">Belongs to the ribonuclease III family.</text>
</comment>
<dbReference type="EC" id="3.1.26.3" evidence="1"/>
<dbReference type="EMBL" id="CP000829">
    <property type="protein sequence ID" value="ACI60779.1"/>
    <property type="molecule type" value="Genomic_DNA"/>
</dbReference>
<dbReference type="SMR" id="B5XKB7"/>
<dbReference type="KEGG" id="soz:Spy49_0447"/>
<dbReference type="HOGENOM" id="CLU_000907_1_3_9"/>
<dbReference type="Proteomes" id="UP000001039">
    <property type="component" value="Chromosome"/>
</dbReference>
<dbReference type="GO" id="GO:0005737">
    <property type="term" value="C:cytoplasm"/>
    <property type="evidence" value="ECO:0007669"/>
    <property type="project" value="UniProtKB-SubCell"/>
</dbReference>
<dbReference type="GO" id="GO:0003725">
    <property type="term" value="F:double-stranded RNA binding"/>
    <property type="evidence" value="ECO:0007669"/>
    <property type="project" value="TreeGrafter"/>
</dbReference>
<dbReference type="GO" id="GO:0046872">
    <property type="term" value="F:metal ion binding"/>
    <property type="evidence" value="ECO:0007669"/>
    <property type="project" value="UniProtKB-KW"/>
</dbReference>
<dbReference type="GO" id="GO:0004525">
    <property type="term" value="F:ribonuclease III activity"/>
    <property type="evidence" value="ECO:0007669"/>
    <property type="project" value="UniProtKB-UniRule"/>
</dbReference>
<dbReference type="GO" id="GO:0019843">
    <property type="term" value="F:rRNA binding"/>
    <property type="evidence" value="ECO:0007669"/>
    <property type="project" value="UniProtKB-KW"/>
</dbReference>
<dbReference type="GO" id="GO:0006397">
    <property type="term" value="P:mRNA processing"/>
    <property type="evidence" value="ECO:0007669"/>
    <property type="project" value="UniProtKB-UniRule"/>
</dbReference>
<dbReference type="GO" id="GO:0010468">
    <property type="term" value="P:regulation of gene expression"/>
    <property type="evidence" value="ECO:0007669"/>
    <property type="project" value="TreeGrafter"/>
</dbReference>
<dbReference type="GO" id="GO:0006364">
    <property type="term" value="P:rRNA processing"/>
    <property type="evidence" value="ECO:0007669"/>
    <property type="project" value="UniProtKB-UniRule"/>
</dbReference>
<dbReference type="GO" id="GO:0008033">
    <property type="term" value="P:tRNA processing"/>
    <property type="evidence" value="ECO:0007669"/>
    <property type="project" value="UniProtKB-KW"/>
</dbReference>
<dbReference type="CDD" id="cd10845">
    <property type="entry name" value="DSRM_RNAse_III_family"/>
    <property type="match status" value="1"/>
</dbReference>
<dbReference type="CDD" id="cd00593">
    <property type="entry name" value="RIBOc"/>
    <property type="match status" value="1"/>
</dbReference>
<dbReference type="FunFam" id="1.10.1520.10:FF:000001">
    <property type="entry name" value="Ribonuclease 3"/>
    <property type="match status" value="1"/>
</dbReference>
<dbReference type="FunFam" id="3.30.160.20:FF:000003">
    <property type="entry name" value="Ribonuclease 3"/>
    <property type="match status" value="1"/>
</dbReference>
<dbReference type="Gene3D" id="3.30.160.20">
    <property type="match status" value="1"/>
</dbReference>
<dbReference type="Gene3D" id="1.10.1520.10">
    <property type="entry name" value="Ribonuclease III domain"/>
    <property type="match status" value="1"/>
</dbReference>
<dbReference type="HAMAP" id="MF_00104">
    <property type="entry name" value="RNase_III"/>
    <property type="match status" value="1"/>
</dbReference>
<dbReference type="InterPro" id="IPR014720">
    <property type="entry name" value="dsRBD_dom"/>
</dbReference>
<dbReference type="InterPro" id="IPR011907">
    <property type="entry name" value="RNase_III"/>
</dbReference>
<dbReference type="InterPro" id="IPR000999">
    <property type="entry name" value="RNase_III_dom"/>
</dbReference>
<dbReference type="InterPro" id="IPR036389">
    <property type="entry name" value="RNase_III_sf"/>
</dbReference>
<dbReference type="NCBIfam" id="TIGR02191">
    <property type="entry name" value="RNaseIII"/>
    <property type="match status" value="1"/>
</dbReference>
<dbReference type="PANTHER" id="PTHR11207:SF0">
    <property type="entry name" value="RIBONUCLEASE 3"/>
    <property type="match status" value="1"/>
</dbReference>
<dbReference type="PANTHER" id="PTHR11207">
    <property type="entry name" value="RIBONUCLEASE III"/>
    <property type="match status" value="1"/>
</dbReference>
<dbReference type="Pfam" id="PF00035">
    <property type="entry name" value="dsrm"/>
    <property type="match status" value="1"/>
</dbReference>
<dbReference type="Pfam" id="PF14622">
    <property type="entry name" value="Ribonucleas_3_3"/>
    <property type="match status" value="1"/>
</dbReference>
<dbReference type="SMART" id="SM00358">
    <property type="entry name" value="DSRM"/>
    <property type="match status" value="1"/>
</dbReference>
<dbReference type="SMART" id="SM00535">
    <property type="entry name" value="RIBOc"/>
    <property type="match status" value="1"/>
</dbReference>
<dbReference type="SUPFAM" id="SSF54768">
    <property type="entry name" value="dsRNA-binding domain-like"/>
    <property type="match status" value="1"/>
</dbReference>
<dbReference type="SUPFAM" id="SSF69065">
    <property type="entry name" value="RNase III domain-like"/>
    <property type="match status" value="1"/>
</dbReference>
<dbReference type="PROSITE" id="PS50137">
    <property type="entry name" value="DS_RBD"/>
    <property type="match status" value="1"/>
</dbReference>
<dbReference type="PROSITE" id="PS00517">
    <property type="entry name" value="RNASE_3_1"/>
    <property type="match status" value="1"/>
</dbReference>
<dbReference type="PROSITE" id="PS50142">
    <property type="entry name" value="RNASE_3_2"/>
    <property type="match status" value="1"/>
</dbReference>
<organism>
    <name type="scientific">Streptococcus pyogenes serotype M49 (strain NZ131)</name>
    <dbReference type="NCBI Taxonomy" id="471876"/>
    <lineage>
        <taxon>Bacteria</taxon>
        <taxon>Bacillati</taxon>
        <taxon>Bacillota</taxon>
        <taxon>Bacilli</taxon>
        <taxon>Lactobacillales</taxon>
        <taxon>Streptococcaceae</taxon>
        <taxon>Streptococcus</taxon>
    </lineage>
</organism>
<protein>
    <recommendedName>
        <fullName evidence="1">Ribonuclease 3</fullName>
        <ecNumber evidence="1">3.1.26.3</ecNumber>
    </recommendedName>
    <alternativeName>
        <fullName evidence="1">Ribonuclease III</fullName>
        <shortName evidence="1">RNase III</shortName>
    </alternativeName>
</protein>
<keyword id="KW-0963">Cytoplasm</keyword>
<keyword id="KW-0255">Endonuclease</keyword>
<keyword id="KW-0378">Hydrolase</keyword>
<keyword id="KW-0460">Magnesium</keyword>
<keyword id="KW-0479">Metal-binding</keyword>
<keyword id="KW-0507">mRNA processing</keyword>
<keyword id="KW-0540">Nuclease</keyword>
<keyword id="KW-0694">RNA-binding</keyword>
<keyword id="KW-0698">rRNA processing</keyword>
<keyword id="KW-0699">rRNA-binding</keyword>
<keyword id="KW-0819">tRNA processing</keyword>
<accession>B5XKB7</accession>
<sequence length="230" mass="25876">MKQLEELLSTSFDIQFNDLTLLETAFTHTSYANEHRLLNVSHNERLEFLGDAVLQLIISEYLFAKYPKKTEGDMSKLRSMIVREESLAGFSRFCSFDAYIKLGKGEEKSGGRRRDTILGDLFEAFLGALLLDKGIDAVRRFLKQVMIPQVEKGNFERVKDYKTCLQEFLQTKGDVVIDYQVISEKGPAHAKQFEVSIVVNGAVLSKGLGKSKKLAEQDAAKNALAQLSEV</sequence>
<gene>
    <name evidence="1" type="primary">rnc</name>
    <name type="ordered locus">Spy49_0447</name>
</gene>
<feature type="chain" id="PRO_1000094138" description="Ribonuclease 3">
    <location>
        <begin position="1"/>
        <end position="230"/>
    </location>
</feature>
<feature type="domain" description="RNase III" evidence="1">
    <location>
        <begin position="1"/>
        <end position="134"/>
    </location>
</feature>
<feature type="domain" description="DRBM" evidence="1">
    <location>
        <begin position="160"/>
        <end position="229"/>
    </location>
</feature>
<feature type="active site" evidence="1">
    <location>
        <position position="51"/>
    </location>
</feature>
<feature type="active site" evidence="1">
    <location>
        <position position="123"/>
    </location>
</feature>
<feature type="binding site" evidence="1">
    <location>
        <position position="47"/>
    </location>
    <ligand>
        <name>Mg(2+)</name>
        <dbReference type="ChEBI" id="CHEBI:18420"/>
    </ligand>
</feature>
<feature type="binding site" evidence="1">
    <location>
        <position position="120"/>
    </location>
    <ligand>
        <name>Mg(2+)</name>
        <dbReference type="ChEBI" id="CHEBI:18420"/>
    </ligand>
</feature>
<feature type="binding site" evidence="1">
    <location>
        <position position="123"/>
    </location>
    <ligand>
        <name>Mg(2+)</name>
        <dbReference type="ChEBI" id="CHEBI:18420"/>
    </ligand>
</feature>
<reference key="1">
    <citation type="journal article" date="2008" name="J. Bacteriol.">
        <title>Genome sequence of a nephritogenic and highly transformable M49 strain of Streptococcus pyogenes.</title>
        <authorList>
            <person name="McShan W.M."/>
            <person name="Ferretti J.J."/>
            <person name="Karasawa T."/>
            <person name="Suvorov A.N."/>
            <person name="Lin S."/>
            <person name="Qin B."/>
            <person name="Jia H."/>
            <person name="Kenton S."/>
            <person name="Najar F."/>
            <person name="Wu H."/>
            <person name="Scott J."/>
            <person name="Roe B.A."/>
            <person name="Savic D.J."/>
        </authorList>
    </citation>
    <scope>NUCLEOTIDE SEQUENCE [LARGE SCALE GENOMIC DNA]</scope>
    <source>
        <strain>NZ131</strain>
    </source>
</reference>
<evidence type="ECO:0000255" key="1">
    <source>
        <dbReference type="HAMAP-Rule" id="MF_00104"/>
    </source>
</evidence>
<proteinExistence type="inferred from homology"/>
<name>RNC_STRPZ</name>